<gene>
    <name evidence="1" type="primary">araA</name>
    <name type="ordered locus">EC55989_0060</name>
</gene>
<dbReference type="EC" id="5.3.1.4" evidence="1"/>
<dbReference type="EMBL" id="CU928145">
    <property type="protein sequence ID" value="CAU95947.1"/>
    <property type="molecule type" value="Genomic_DNA"/>
</dbReference>
<dbReference type="RefSeq" id="WP_000151732.1">
    <property type="nucleotide sequence ID" value="NC_011748.1"/>
</dbReference>
<dbReference type="SMR" id="B7L4I3"/>
<dbReference type="KEGG" id="eck:EC55989_0060"/>
<dbReference type="HOGENOM" id="CLU_045663_0_0_6"/>
<dbReference type="UniPathway" id="UPA00145">
    <property type="reaction ID" value="UER00565"/>
</dbReference>
<dbReference type="Proteomes" id="UP000000746">
    <property type="component" value="Chromosome"/>
</dbReference>
<dbReference type="GO" id="GO:0005829">
    <property type="term" value="C:cytosol"/>
    <property type="evidence" value="ECO:0007669"/>
    <property type="project" value="TreeGrafter"/>
</dbReference>
<dbReference type="GO" id="GO:0008733">
    <property type="term" value="F:L-arabinose isomerase activity"/>
    <property type="evidence" value="ECO:0007669"/>
    <property type="project" value="UniProtKB-UniRule"/>
</dbReference>
<dbReference type="GO" id="GO:0030145">
    <property type="term" value="F:manganese ion binding"/>
    <property type="evidence" value="ECO:0007669"/>
    <property type="project" value="UniProtKB-UniRule"/>
</dbReference>
<dbReference type="GO" id="GO:0019569">
    <property type="term" value="P:L-arabinose catabolic process to xylulose 5-phosphate"/>
    <property type="evidence" value="ECO:0007669"/>
    <property type="project" value="UniProtKB-UniRule"/>
</dbReference>
<dbReference type="CDD" id="cd03557">
    <property type="entry name" value="L-arabinose_isomerase"/>
    <property type="match status" value="1"/>
</dbReference>
<dbReference type="FunFam" id="3.40.50.10940:FF:000001">
    <property type="entry name" value="L-arabinose isomerase"/>
    <property type="match status" value="1"/>
</dbReference>
<dbReference type="Gene3D" id="3.40.50.10940">
    <property type="match status" value="1"/>
</dbReference>
<dbReference type="HAMAP" id="MF_00519">
    <property type="entry name" value="Arabinose_Isome"/>
    <property type="match status" value="1"/>
</dbReference>
<dbReference type="InterPro" id="IPR024664">
    <property type="entry name" value="Ara_Isoase_C"/>
</dbReference>
<dbReference type="InterPro" id="IPR055390">
    <property type="entry name" value="AraA_central"/>
</dbReference>
<dbReference type="InterPro" id="IPR055389">
    <property type="entry name" value="AraA_N"/>
</dbReference>
<dbReference type="InterPro" id="IPR038583">
    <property type="entry name" value="AraA_N_sf"/>
</dbReference>
<dbReference type="InterPro" id="IPR004216">
    <property type="entry name" value="Fuc/Ara_isomerase_C"/>
</dbReference>
<dbReference type="InterPro" id="IPR009015">
    <property type="entry name" value="Fucose_isomerase_N/cen_sf"/>
</dbReference>
<dbReference type="InterPro" id="IPR003762">
    <property type="entry name" value="Lara_isomerase"/>
</dbReference>
<dbReference type="NCBIfam" id="NF002795">
    <property type="entry name" value="PRK02929.1"/>
    <property type="match status" value="1"/>
</dbReference>
<dbReference type="PANTHER" id="PTHR38464">
    <property type="entry name" value="L-ARABINOSE ISOMERASE"/>
    <property type="match status" value="1"/>
</dbReference>
<dbReference type="PANTHER" id="PTHR38464:SF1">
    <property type="entry name" value="L-ARABINOSE ISOMERASE"/>
    <property type="match status" value="1"/>
</dbReference>
<dbReference type="Pfam" id="PF24856">
    <property type="entry name" value="AraA_central"/>
    <property type="match status" value="1"/>
</dbReference>
<dbReference type="Pfam" id="PF02610">
    <property type="entry name" value="AraA_N"/>
    <property type="match status" value="1"/>
</dbReference>
<dbReference type="Pfam" id="PF11762">
    <property type="entry name" value="Arabinose_Iso_C"/>
    <property type="match status" value="1"/>
</dbReference>
<dbReference type="PIRSF" id="PIRSF001478">
    <property type="entry name" value="L-ara_isomerase"/>
    <property type="match status" value="1"/>
</dbReference>
<dbReference type="SUPFAM" id="SSF50443">
    <property type="entry name" value="FucI/AraA C-terminal domain-like"/>
    <property type="match status" value="1"/>
</dbReference>
<dbReference type="SUPFAM" id="SSF53743">
    <property type="entry name" value="FucI/AraA N-terminal and middle domains"/>
    <property type="match status" value="1"/>
</dbReference>
<protein>
    <recommendedName>
        <fullName evidence="1">L-arabinose isomerase</fullName>
        <ecNumber evidence="1">5.3.1.4</ecNumber>
    </recommendedName>
</protein>
<reference key="1">
    <citation type="journal article" date="2009" name="PLoS Genet.">
        <title>Organised genome dynamics in the Escherichia coli species results in highly diverse adaptive paths.</title>
        <authorList>
            <person name="Touchon M."/>
            <person name="Hoede C."/>
            <person name="Tenaillon O."/>
            <person name="Barbe V."/>
            <person name="Baeriswyl S."/>
            <person name="Bidet P."/>
            <person name="Bingen E."/>
            <person name="Bonacorsi S."/>
            <person name="Bouchier C."/>
            <person name="Bouvet O."/>
            <person name="Calteau A."/>
            <person name="Chiapello H."/>
            <person name="Clermont O."/>
            <person name="Cruveiller S."/>
            <person name="Danchin A."/>
            <person name="Diard M."/>
            <person name="Dossat C."/>
            <person name="Karoui M.E."/>
            <person name="Frapy E."/>
            <person name="Garry L."/>
            <person name="Ghigo J.M."/>
            <person name="Gilles A.M."/>
            <person name="Johnson J."/>
            <person name="Le Bouguenec C."/>
            <person name="Lescat M."/>
            <person name="Mangenot S."/>
            <person name="Martinez-Jehanne V."/>
            <person name="Matic I."/>
            <person name="Nassif X."/>
            <person name="Oztas S."/>
            <person name="Petit M.A."/>
            <person name="Pichon C."/>
            <person name="Rouy Z."/>
            <person name="Ruf C.S."/>
            <person name="Schneider D."/>
            <person name="Tourret J."/>
            <person name="Vacherie B."/>
            <person name="Vallenet D."/>
            <person name="Medigue C."/>
            <person name="Rocha E.P.C."/>
            <person name="Denamur E."/>
        </authorList>
    </citation>
    <scope>NUCLEOTIDE SEQUENCE [LARGE SCALE GENOMIC DNA]</scope>
    <source>
        <strain>55989 / EAEC</strain>
    </source>
</reference>
<organism>
    <name type="scientific">Escherichia coli (strain 55989 / EAEC)</name>
    <dbReference type="NCBI Taxonomy" id="585055"/>
    <lineage>
        <taxon>Bacteria</taxon>
        <taxon>Pseudomonadati</taxon>
        <taxon>Pseudomonadota</taxon>
        <taxon>Gammaproteobacteria</taxon>
        <taxon>Enterobacterales</taxon>
        <taxon>Enterobacteriaceae</taxon>
        <taxon>Escherichia</taxon>
    </lineage>
</organism>
<feature type="chain" id="PRO_1000146226" description="L-arabinose isomerase">
    <location>
        <begin position="1"/>
        <end position="500"/>
    </location>
</feature>
<feature type="binding site" evidence="1">
    <location>
        <position position="306"/>
    </location>
    <ligand>
        <name>Mn(2+)</name>
        <dbReference type="ChEBI" id="CHEBI:29035"/>
    </ligand>
</feature>
<feature type="binding site" evidence="1">
    <location>
        <position position="333"/>
    </location>
    <ligand>
        <name>Mn(2+)</name>
        <dbReference type="ChEBI" id="CHEBI:29035"/>
    </ligand>
</feature>
<feature type="binding site" evidence="1">
    <location>
        <position position="350"/>
    </location>
    <ligand>
        <name>Mn(2+)</name>
        <dbReference type="ChEBI" id="CHEBI:29035"/>
    </ligand>
</feature>
<feature type="binding site" evidence="1">
    <location>
        <position position="450"/>
    </location>
    <ligand>
        <name>Mn(2+)</name>
        <dbReference type="ChEBI" id="CHEBI:29035"/>
    </ligand>
</feature>
<proteinExistence type="inferred from homology"/>
<keyword id="KW-0054">Arabinose catabolism</keyword>
<keyword id="KW-0119">Carbohydrate metabolism</keyword>
<keyword id="KW-0413">Isomerase</keyword>
<keyword id="KW-0464">Manganese</keyword>
<keyword id="KW-0479">Metal-binding</keyword>
<keyword id="KW-1185">Reference proteome</keyword>
<sequence length="500" mass="56050">MTIFDNYEVWFVIGSQHLYGPETLRQVTQHAEHVVNALNTEAKLPCKLVLKPLGTTPDEITAICRDANYDDRCAGLVVWLHTFSPAKMWINGLTMLNKPLLQFHTQFNAALPWDSIDMDFMNLNQTAHGGREFGFIGARMRQQHAVVTGHWQDKQAHERIGSWMRQAVSKQDTRHLKVCRFGDNMREVAVTDGDKVAAQIKFGFSVNTWAVGDLVQVVNSISDGDVNALVDEYESCYTMTPATQIHGEKRQNVLEAARIELGMKRFLEQGGFHAFTTTFEDLHGLKQLPGLAVQRLMQQGYGFAGEGDWKTAALLRIMKVMSTGLQGGTSFMEDYTYHFEKGNDLVLGSHMLEVCPSIAVEEKPILDVQHLGIGGKDDPARLIFNTQTGPAIVASLIDLGDRYRLLVNCIDTVKTPHSLPKLPVANALWKAQPDLPTASEAWILAGGAHHTVFSHALNLNDMCQFAEMHDIEITVIDNDTRLPAFKDALRWNEVYYGFRR</sequence>
<comment type="function">
    <text evidence="1">Catalyzes the conversion of L-arabinose to L-ribulose.</text>
</comment>
<comment type="catalytic activity">
    <reaction evidence="1">
        <text>beta-L-arabinopyranose = L-ribulose</text>
        <dbReference type="Rhea" id="RHEA:14821"/>
        <dbReference type="ChEBI" id="CHEBI:16880"/>
        <dbReference type="ChEBI" id="CHEBI:40886"/>
        <dbReference type="EC" id="5.3.1.4"/>
    </reaction>
</comment>
<comment type="cofactor">
    <cofactor evidence="1">
        <name>Mn(2+)</name>
        <dbReference type="ChEBI" id="CHEBI:29035"/>
    </cofactor>
    <text evidence="1">Binds 1 Mn(2+) ion per subunit.</text>
</comment>
<comment type="pathway">
    <text evidence="1">Carbohydrate degradation; L-arabinose degradation via L-ribulose; D-xylulose 5-phosphate from L-arabinose (bacterial route): step 1/3.</text>
</comment>
<comment type="subunit">
    <text evidence="1">Homohexamer.</text>
</comment>
<comment type="similarity">
    <text evidence="1">Belongs to the arabinose isomerase family.</text>
</comment>
<accession>B7L4I3</accession>
<evidence type="ECO:0000255" key="1">
    <source>
        <dbReference type="HAMAP-Rule" id="MF_00519"/>
    </source>
</evidence>
<name>ARAA_ECO55</name>